<dbReference type="EMBL" id="AE014296">
    <property type="protein sequence ID" value="AAF50341.1"/>
    <property type="molecule type" value="Genomic_DNA"/>
</dbReference>
<dbReference type="EMBL" id="AY058698">
    <property type="protein sequence ID" value="AAL13927.1"/>
    <property type="molecule type" value="mRNA"/>
</dbReference>
<dbReference type="RefSeq" id="NP_648273.1">
    <property type="nucleotide sequence ID" value="NM_140016.3"/>
</dbReference>
<dbReference type="SMR" id="Q9VSS2"/>
<dbReference type="BioGRID" id="64432">
    <property type="interactions" value="23"/>
</dbReference>
<dbReference type="ComplexPortal" id="CPX-2657">
    <property type="entry name" value="Signal recognition particle"/>
</dbReference>
<dbReference type="DIP" id="DIP-22114N"/>
<dbReference type="FunCoup" id="Q9VSS2">
    <property type="interactions" value="2200"/>
</dbReference>
<dbReference type="IntAct" id="Q9VSS2">
    <property type="interactions" value="94"/>
</dbReference>
<dbReference type="STRING" id="7227.FBpp0076244"/>
<dbReference type="PaxDb" id="7227-FBpp0076244"/>
<dbReference type="DNASU" id="39028"/>
<dbReference type="EnsemblMetazoa" id="FBtr0076517">
    <property type="protein sequence ID" value="FBpp0076244"/>
    <property type="gene ID" value="FBgn0035947"/>
</dbReference>
<dbReference type="GeneID" id="39028"/>
<dbReference type="KEGG" id="dme:Dmel_CG5064"/>
<dbReference type="UCSC" id="CG5064-RA">
    <property type="organism name" value="d. melanogaster"/>
</dbReference>
<dbReference type="AGR" id="FB:FBgn0035947"/>
<dbReference type="CTD" id="6730"/>
<dbReference type="FlyBase" id="FBgn0035947">
    <property type="gene designation" value="Srp68"/>
</dbReference>
<dbReference type="VEuPathDB" id="VectorBase:FBgn0035947"/>
<dbReference type="eggNOG" id="KOG2460">
    <property type="taxonomic scope" value="Eukaryota"/>
</dbReference>
<dbReference type="GeneTree" id="ENSGT00390000011856"/>
<dbReference type="HOGENOM" id="CLU_018649_0_1_1"/>
<dbReference type="InParanoid" id="Q9VSS2"/>
<dbReference type="OMA" id="DERFIHI"/>
<dbReference type="OrthoDB" id="10255118at2759"/>
<dbReference type="PhylomeDB" id="Q9VSS2"/>
<dbReference type="Reactome" id="R-DME-1799339">
    <property type="pathway name" value="SRP-dependent cotranslational protein targeting to membrane"/>
</dbReference>
<dbReference type="SignaLink" id="Q9VSS2"/>
<dbReference type="BioGRID-ORCS" id="39028">
    <property type="hits" value="0 hits in 1 CRISPR screen"/>
</dbReference>
<dbReference type="GenomeRNAi" id="39028"/>
<dbReference type="PRO" id="PR:Q9VSS2"/>
<dbReference type="Proteomes" id="UP000000803">
    <property type="component" value="Chromosome 3L"/>
</dbReference>
<dbReference type="Bgee" id="FBgn0035947">
    <property type="expression patterns" value="Expressed in embryonic/larval hemocyte (Drosophila) and 110 other cell types or tissues"/>
</dbReference>
<dbReference type="GO" id="GO:0005783">
    <property type="term" value="C:endoplasmic reticulum"/>
    <property type="evidence" value="ECO:0007669"/>
    <property type="project" value="UniProtKB-SubCell"/>
</dbReference>
<dbReference type="GO" id="GO:0005730">
    <property type="term" value="C:nucleolus"/>
    <property type="evidence" value="ECO:0007669"/>
    <property type="project" value="UniProtKB-SubCell"/>
</dbReference>
<dbReference type="GO" id="GO:0005786">
    <property type="term" value="C:signal recognition particle, endoplasmic reticulum targeting"/>
    <property type="evidence" value="ECO:0000318"/>
    <property type="project" value="GO_Central"/>
</dbReference>
<dbReference type="GO" id="GO:0008312">
    <property type="term" value="F:7S RNA binding"/>
    <property type="evidence" value="ECO:0007669"/>
    <property type="project" value="InterPro"/>
</dbReference>
<dbReference type="GO" id="GO:0030942">
    <property type="term" value="F:endoplasmic reticulum signal peptide binding"/>
    <property type="evidence" value="ECO:0007669"/>
    <property type="project" value="InterPro"/>
</dbReference>
<dbReference type="GO" id="GO:0005047">
    <property type="term" value="F:signal recognition particle binding"/>
    <property type="evidence" value="ECO:0000318"/>
    <property type="project" value="GO_Central"/>
</dbReference>
<dbReference type="GO" id="GO:0006614">
    <property type="term" value="P:SRP-dependent cotranslational protein targeting to membrane"/>
    <property type="evidence" value="ECO:0000318"/>
    <property type="project" value="GO_Central"/>
</dbReference>
<dbReference type="CDD" id="cd15481">
    <property type="entry name" value="SRP68-RBD"/>
    <property type="match status" value="1"/>
</dbReference>
<dbReference type="FunFam" id="1.10.3450.40:FF:000001">
    <property type="entry name" value="Signal recognition particle subunit SRP68"/>
    <property type="match status" value="1"/>
</dbReference>
<dbReference type="Gene3D" id="1.10.3450.40">
    <property type="entry name" value="Signal recognition particle, SRP68 subunit, RNA-binding domain"/>
    <property type="match status" value="1"/>
</dbReference>
<dbReference type="InterPro" id="IPR026258">
    <property type="entry name" value="SRP68"/>
</dbReference>
<dbReference type="InterPro" id="IPR034652">
    <property type="entry name" value="SRP68-RBD"/>
</dbReference>
<dbReference type="InterPro" id="IPR038253">
    <property type="entry name" value="SRP68_N_sf"/>
</dbReference>
<dbReference type="PANTHER" id="PTHR12860">
    <property type="entry name" value="SIGNAL RECOGNITION PARTICLE 68 KDA PROTEIN"/>
    <property type="match status" value="1"/>
</dbReference>
<dbReference type="PANTHER" id="PTHR12860:SF0">
    <property type="entry name" value="SIGNAL RECOGNITION PARTICLE SUBUNIT SRP68"/>
    <property type="match status" value="1"/>
</dbReference>
<dbReference type="Pfam" id="PF16969">
    <property type="entry name" value="SRP68"/>
    <property type="match status" value="1"/>
</dbReference>
<dbReference type="PIRSF" id="PIRSF038995">
    <property type="entry name" value="SRP68"/>
    <property type="match status" value="1"/>
</dbReference>
<organism>
    <name type="scientific">Drosophila melanogaster</name>
    <name type="common">Fruit fly</name>
    <dbReference type="NCBI Taxonomy" id="7227"/>
    <lineage>
        <taxon>Eukaryota</taxon>
        <taxon>Metazoa</taxon>
        <taxon>Ecdysozoa</taxon>
        <taxon>Arthropoda</taxon>
        <taxon>Hexapoda</taxon>
        <taxon>Insecta</taxon>
        <taxon>Pterygota</taxon>
        <taxon>Neoptera</taxon>
        <taxon>Endopterygota</taxon>
        <taxon>Diptera</taxon>
        <taxon>Brachycera</taxon>
        <taxon>Muscomorpha</taxon>
        <taxon>Ephydroidea</taxon>
        <taxon>Drosophilidae</taxon>
        <taxon>Drosophila</taxon>
        <taxon>Sophophora</taxon>
    </lineage>
</organism>
<sequence length="604" mass="69009">MVVQEDNPNTGDVQEKTETAPVAEPSKIFTVEILHMIKDAQQQHGLRHGDFQRYRGYCSRRIRRLRKALKYPQGDKRHFKRRDVTIGQLTGKKADERFIHIPLICAERAWAYAMQLKQESNTEPRKRFHLVNKLRRACFYALQLQELCNTEAFDARTKLECEAYVAWMHGTLHFELQLWKTAGEHLKRAQVVYENLGKALPEDEQELYRAKVNEFTPNLRYCAYNISGGASGGKIDEILELRAQGVLENLDVLVSQTKTESSEGLQTIDWRGRKVTVRPEKVRLFLLSAQELDKSLAKTTKQDAKIELIERILMDCKDAIQAVRDEIKQDPKLRSLTTGQTVSGVQYLLAYLSYIRHSRTLQRNLCLVEQAKLNFYDPNLQSQQNVGDGKRVRPQDLARLYEIILQNVTEMQQINGLEDDATYQSEVENLAITFKAFRCYYIALTLIDIKKWKEAVALYERASNYATEALKGKSSPEFQLQEELKKVVSAIDGCKFSAHAYSVLEDDNSEESGTTTKSQKTTKPLYERLSLYKEDQSLHTKAPNVFKLTPDMEPIPCKPIFFDLAMTYVELPSLEGKLESPGKKGASITGFVKGFLGWGGGGNK</sequence>
<accession>Q9VSS2</accession>
<keyword id="KW-0963">Cytoplasm</keyword>
<keyword id="KW-0256">Endoplasmic reticulum</keyword>
<keyword id="KW-0539">Nucleus</keyword>
<keyword id="KW-1185">Reference proteome</keyword>
<keyword id="KW-0687">Ribonucleoprotein</keyword>
<keyword id="KW-0694">RNA-binding</keyword>
<keyword id="KW-0733">Signal recognition particle</keyword>
<feature type="chain" id="PRO_0000135230" description="Signal recognition particle subunit SRP68">
    <location>
        <begin position="1"/>
        <end position="604"/>
    </location>
</feature>
<feature type="region of interest" description="Disordered" evidence="4">
    <location>
        <begin position="1"/>
        <end position="21"/>
    </location>
</feature>
<feature type="compositionally biased region" description="Polar residues" evidence="4">
    <location>
        <begin position="1"/>
        <end position="12"/>
    </location>
</feature>
<comment type="function">
    <text evidence="1 3">Component of the signal recognition particle (SRP) complex, a ribonucleoprotein complex that mediates the cotranslational targeting of secretory and membrane proteins to the endoplasmic reticulum (ER) (By similarity). The SRP complex interacts with the signal sequence in nascent secretory and membrane proteins and directs them to the membrane of the ER (By similarity). The SRP complex targets the ribosome-nascent chain complex to the SRP receptor (SR), which is anchored in the ER, where SR compaction and GTPase rearrangement drive cotranslational protein translocation into the ER (By similarity). Binds the signal recognition particle RNA (7SL RNA), Srp72 binds to this complex subsequently (By similarity). The SRP complex possibly participates in the elongation arrest function (By similarity).</text>
</comment>
<comment type="subunit">
    <text evidence="2 3">Heterodimer with Srp72 (By similarity). Srp68/Srp72 heterodimer formation is stabilized by the presence of 7SL RNA (By similarity). Component of a signal recognition particle (SRP) complex that consists of a 7SL RNA molecule of 300 nucleotides and six protein subunits: Srp72, Srp68, Srp54, Srp19, Srp14 and Srp9 (By similarity).</text>
</comment>
<comment type="subcellular location">
    <subcellularLocation>
        <location evidence="3">Cytoplasm</location>
    </subcellularLocation>
    <subcellularLocation>
        <location evidence="3">Nucleus</location>
        <location evidence="3">Nucleolus</location>
    </subcellularLocation>
    <subcellularLocation>
        <location evidence="3">Endoplasmic reticulum</location>
    </subcellularLocation>
</comment>
<comment type="similarity">
    <text evidence="5">Belongs to the SRP68 family.</text>
</comment>
<evidence type="ECO:0000250" key="1">
    <source>
        <dbReference type="UniProtKB" id="P38687"/>
    </source>
</evidence>
<evidence type="ECO:0000250" key="2">
    <source>
        <dbReference type="UniProtKB" id="Q00004"/>
    </source>
</evidence>
<evidence type="ECO:0000250" key="3">
    <source>
        <dbReference type="UniProtKB" id="Q9UHB9"/>
    </source>
</evidence>
<evidence type="ECO:0000256" key="4">
    <source>
        <dbReference type="SAM" id="MobiDB-lite"/>
    </source>
</evidence>
<evidence type="ECO:0000305" key="5"/>
<protein>
    <recommendedName>
        <fullName>Signal recognition particle subunit SRP68</fullName>
        <shortName>SRP68</shortName>
    </recommendedName>
    <alternativeName>
        <fullName>Signal recognition particle 68 kDa protein</fullName>
    </alternativeName>
</protein>
<reference key="1">
    <citation type="journal article" date="2000" name="Science">
        <title>The genome sequence of Drosophila melanogaster.</title>
        <authorList>
            <person name="Adams M.D."/>
            <person name="Celniker S.E."/>
            <person name="Holt R.A."/>
            <person name="Evans C.A."/>
            <person name="Gocayne J.D."/>
            <person name="Amanatides P.G."/>
            <person name="Scherer S.E."/>
            <person name="Li P.W."/>
            <person name="Hoskins R.A."/>
            <person name="Galle R.F."/>
            <person name="George R.A."/>
            <person name="Lewis S.E."/>
            <person name="Richards S."/>
            <person name="Ashburner M."/>
            <person name="Henderson S.N."/>
            <person name="Sutton G.G."/>
            <person name="Wortman J.R."/>
            <person name="Yandell M.D."/>
            <person name="Zhang Q."/>
            <person name="Chen L.X."/>
            <person name="Brandon R.C."/>
            <person name="Rogers Y.-H.C."/>
            <person name="Blazej R.G."/>
            <person name="Champe M."/>
            <person name="Pfeiffer B.D."/>
            <person name="Wan K.H."/>
            <person name="Doyle C."/>
            <person name="Baxter E.G."/>
            <person name="Helt G."/>
            <person name="Nelson C.R."/>
            <person name="Miklos G.L.G."/>
            <person name="Abril J.F."/>
            <person name="Agbayani A."/>
            <person name="An H.-J."/>
            <person name="Andrews-Pfannkoch C."/>
            <person name="Baldwin D."/>
            <person name="Ballew R.M."/>
            <person name="Basu A."/>
            <person name="Baxendale J."/>
            <person name="Bayraktaroglu L."/>
            <person name="Beasley E.M."/>
            <person name="Beeson K.Y."/>
            <person name="Benos P.V."/>
            <person name="Berman B.P."/>
            <person name="Bhandari D."/>
            <person name="Bolshakov S."/>
            <person name="Borkova D."/>
            <person name="Botchan M.R."/>
            <person name="Bouck J."/>
            <person name="Brokstein P."/>
            <person name="Brottier P."/>
            <person name="Burtis K.C."/>
            <person name="Busam D.A."/>
            <person name="Butler H."/>
            <person name="Cadieu E."/>
            <person name="Center A."/>
            <person name="Chandra I."/>
            <person name="Cherry J.M."/>
            <person name="Cawley S."/>
            <person name="Dahlke C."/>
            <person name="Davenport L.B."/>
            <person name="Davies P."/>
            <person name="de Pablos B."/>
            <person name="Delcher A."/>
            <person name="Deng Z."/>
            <person name="Mays A.D."/>
            <person name="Dew I."/>
            <person name="Dietz S.M."/>
            <person name="Dodson K."/>
            <person name="Doup L.E."/>
            <person name="Downes M."/>
            <person name="Dugan-Rocha S."/>
            <person name="Dunkov B.C."/>
            <person name="Dunn P."/>
            <person name="Durbin K.J."/>
            <person name="Evangelista C.C."/>
            <person name="Ferraz C."/>
            <person name="Ferriera S."/>
            <person name="Fleischmann W."/>
            <person name="Fosler C."/>
            <person name="Gabrielian A.E."/>
            <person name="Garg N.S."/>
            <person name="Gelbart W.M."/>
            <person name="Glasser K."/>
            <person name="Glodek A."/>
            <person name="Gong F."/>
            <person name="Gorrell J.H."/>
            <person name="Gu Z."/>
            <person name="Guan P."/>
            <person name="Harris M."/>
            <person name="Harris N.L."/>
            <person name="Harvey D.A."/>
            <person name="Heiman T.J."/>
            <person name="Hernandez J.R."/>
            <person name="Houck J."/>
            <person name="Hostin D."/>
            <person name="Houston K.A."/>
            <person name="Howland T.J."/>
            <person name="Wei M.-H."/>
            <person name="Ibegwam C."/>
            <person name="Jalali M."/>
            <person name="Kalush F."/>
            <person name="Karpen G.H."/>
            <person name="Ke Z."/>
            <person name="Kennison J.A."/>
            <person name="Ketchum K.A."/>
            <person name="Kimmel B.E."/>
            <person name="Kodira C.D."/>
            <person name="Kraft C.L."/>
            <person name="Kravitz S."/>
            <person name="Kulp D."/>
            <person name="Lai Z."/>
            <person name="Lasko P."/>
            <person name="Lei Y."/>
            <person name="Levitsky A.A."/>
            <person name="Li J.H."/>
            <person name="Li Z."/>
            <person name="Liang Y."/>
            <person name="Lin X."/>
            <person name="Liu X."/>
            <person name="Mattei B."/>
            <person name="McIntosh T.C."/>
            <person name="McLeod M.P."/>
            <person name="McPherson D."/>
            <person name="Merkulov G."/>
            <person name="Milshina N.V."/>
            <person name="Mobarry C."/>
            <person name="Morris J."/>
            <person name="Moshrefi A."/>
            <person name="Mount S.M."/>
            <person name="Moy M."/>
            <person name="Murphy B."/>
            <person name="Murphy L."/>
            <person name="Muzny D.M."/>
            <person name="Nelson D.L."/>
            <person name="Nelson D.R."/>
            <person name="Nelson K.A."/>
            <person name="Nixon K."/>
            <person name="Nusskern D.R."/>
            <person name="Pacleb J.M."/>
            <person name="Palazzolo M."/>
            <person name="Pittman G.S."/>
            <person name="Pan S."/>
            <person name="Pollard J."/>
            <person name="Puri V."/>
            <person name="Reese M.G."/>
            <person name="Reinert K."/>
            <person name="Remington K."/>
            <person name="Saunders R.D.C."/>
            <person name="Scheeler F."/>
            <person name="Shen H."/>
            <person name="Shue B.C."/>
            <person name="Siden-Kiamos I."/>
            <person name="Simpson M."/>
            <person name="Skupski M.P."/>
            <person name="Smith T.J."/>
            <person name="Spier E."/>
            <person name="Spradling A.C."/>
            <person name="Stapleton M."/>
            <person name="Strong R."/>
            <person name="Sun E."/>
            <person name="Svirskas R."/>
            <person name="Tector C."/>
            <person name="Turner R."/>
            <person name="Venter E."/>
            <person name="Wang A.H."/>
            <person name="Wang X."/>
            <person name="Wang Z.-Y."/>
            <person name="Wassarman D.A."/>
            <person name="Weinstock G.M."/>
            <person name="Weissenbach J."/>
            <person name="Williams S.M."/>
            <person name="Woodage T."/>
            <person name="Worley K.C."/>
            <person name="Wu D."/>
            <person name="Yang S."/>
            <person name="Yao Q.A."/>
            <person name="Ye J."/>
            <person name="Yeh R.-F."/>
            <person name="Zaveri J.S."/>
            <person name="Zhan M."/>
            <person name="Zhang G."/>
            <person name="Zhao Q."/>
            <person name="Zheng L."/>
            <person name="Zheng X.H."/>
            <person name="Zhong F.N."/>
            <person name="Zhong W."/>
            <person name="Zhou X."/>
            <person name="Zhu S.C."/>
            <person name="Zhu X."/>
            <person name="Smith H.O."/>
            <person name="Gibbs R.A."/>
            <person name="Myers E.W."/>
            <person name="Rubin G.M."/>
            <person name="Venter J.C."/>
        </authorList>
    </citation>
    <scope>NUCLEOTIDE SEQUENCE [LARGE SCALE GENOMIC DNA]</scope>
    <source>
        <strain>Berkeley</strain>
    </source>
</reference>
<reference key="2">
    <citation type="journal article" date="2002" name="Genome Biol.">
        <title>Annotation of the Drosophila melanogaster euchromatic genome: a systematic review.</title>
        <authorList>
            <person name="Misra S."/>
            <person name="Crosby M.A."/>
            <person name="Mungall C.J."/>
            <person name="Matthews B.B."/>
            <person name="Campbell K.S."/>
            <person name="Hradecky P."/>
            <person name="Huang Y."/>
            <person name="Kaminker J.S."/>
            <person name="Millburn G.H."/>
            <person name="Prochnik S.E."/>
            <person name="Smith C.D."/>
            <person name="Tupy J.L."/>
            <person name="Whitfield E.J."/>
            <person name="Bayraktaroglu L."/>
            <person name="Berman B.P."/>
            <person name="Bettencourt B.R."/>
            <person name="Celniker S.E."/>
            <person name="de Grey A.D.N.J."/>
            <person name="Drysdale R.A."/>
            <person name="Harris N.L."/>
            <person name="Richter J."/>
            <person name="Russo S."/>
            <person name="Schroeder A.J."/>
            <person name="Shu S.Q."/>
            <person name="Stapleton M."/>
            <person name="Yamada C."/>
            <person name="Ashburner M."/>
            <person name="Gelbart W.M."/>
            <person name="Rubin G.M."/>
            <person name="Lewis S.E."/>
        </authorList>
    </citation>
    <scope>GENOME REANNOTATION</scope>
    <source>
        <strain>Berkeley</strain>
    </source>
</reference>
<reference key="3">
    <citation type="journal article" date="2002" name="Genome Biol.">
        <title>A Drosophila full-length cDNA resource.</title>
        <authorList>
            <person name="Stapleton M."/>
            <person name="Carlson J.W."/>
            <person name="Brokstein P."/>
            <person name="Yu C."/>
            <person name="Champe M."/>
            <person name="George R.A."/>
            <person name="Guarin H."/>
            <person name="Kronmiller B."/>
            <person name="Pacleb J.M."/>
            <person name="Park S."/>
            <person name="Wan K.H."/>
            <person name="Rubin G.M."/>
            <person name="Celniker S.E."/>
        </authorList>
    </citation>
    <scope>NUCLEOTIDE SEQUENCE [LARGE SCALE MRNA]</scope>
    <source>
        <strain>Berkeley</strain>
        <tissue>Embryo</tissue>
    </source>
</reference>
<reference key="4">
    <citation type="journal article" date="2005" name="Development">
        <title>CrebA regulates secretory activity in the Drosophila salivary gland and epidermis.</title>
        <authorList>
            <person name="Abrams E.W."/>
            <person name="Andrew D.J."/>
        </authorList>
    </citation>
    <scope>IDENTIFICATION</scope>
</reference>
<name>SRP68_DROME</name>
<gene>
    <name type="primary">Srp68</name>
    <name type="ORF">CG5064</name>
</gene>
<proteinExistence type="evidence at transcript level"/>